<comment type="catalytic activity">
    <reaction evidence="1">
        <text>2-formamido-N(1)-(5-O-phospho-beta-D-ribosyl)acetamidine + ATP = 5-amino-1-(5-phospho-beta-D-ribosyl)imidazole + ADP + phosphate + H(+)</text>
        <dbReference type="Rhea" id="RHEA:23032"/>
        <dbReference type="ChEBI" id="CHEBI:15378"/>
        <dbReference type="ChEBI" id="CHEBI:30616"/>
        <dbReference type="ChEBI" id="CHEBI:43474"/>
        <dbReference type="ChEBI" id="CHEBI:137981"/>
        <dbReference type="ChEBI" id="CHEBI:147287"/>
        <dbReference type="ChEBI" id="CHEBI:456216"/>
        <dbReference type="EC" id="6.3.3.1"/>
    </reaction>
</comment>
<comment type="pathway">
    <text evidence="1">Purine metabolism; IMP biosynthesis via de novo pathway; 5-amino-1-(5-phospho-D-ribosyl)imidazole from N(2)-formyl-N(1)-(5-phospho-D-ribosyl)glycinamide: step 2/2.</text>
</comment>
<comment type="subcellular location">
    <subcellularLocation>
        <location evidence="1">Cytoplasm</location>
    </subcellularLocation>
</comment>
<comment type="similarity">
    <text evidence="1">Belongs to the AIR synthase family.</text>
</comment>
<reference key="1">
    <citation type="journal article" date="2003" name="Nat. Biotechnol.">
        <title>The genome sequence of the entomopathogenic bacterium Photorhabdus luminescens.</title>
        <authorList>
            <person name="Duchaud E."/>
            <person name="Rusniok C."/>
            <person name="Frangeul L."/>
            <person name="Buchrieser C."/>
            <person name="Givaudan A."/>
            <person name="Taourit S."/>
            <person name="Bocs S."/>
            <person name="Boursaux-Eude C."/>
            <person name="Chandler M."/>
            <person name="Charles J.-F."/>
            <person name="Dassa E."/>
            <person name="Derose R."/>
            <person name="Derzelle S."/>
            <person name="Freyssinet G."/>
            <person name="Gaudriault S."/>
            <person name="Medigue C."/>
            <person name="Lanois A."/>
            <person name="Powell K."/>
            <person name="Siguier P."/>
            <person name="Vincent R."/>
            <person name="Wingate V."/>
            <person name="Zouine M."/>
            <person name="Glaser P."/>
            <person name="Boemare N."/>
            <person name="Danchin A."/>
            <person name="Kunst F."/>
        </authorList>
    </citation>
    <scope>NUCLEOTIDE SEQUENCE [LARGE SCALE GENOMIC DNA]</scope>
    <source>
        <strain>DSM 15139 / CIP 105565 / TT01</strain>
    </source>
</reference>
<name>PUR5_PHOLL</name>
<feature type="chain" id="PRO_0000148229" description="Phosphoribosylformylglycinamidine cyclo-ligase">
    <location>
        <begin position="1"/>
        <end position="346"/>
    </location>
</feature>
<evidence type="ECO:0000255" key="1">
    <source>
        <dbReference type="HAMAP-Rule" id="MF_00741"/>
    </source>
</evidence>
<sequence>MTNKTSLSYKDAGVDIDAGNALVNRIKGVVKQTRRPEVMGGLGGFGALCALPQKYREPILVSGTDGVGTKLRLAMDLKRHDTIGIDLVAMCVNDLVVQGAEPLFFLDYYATGKLDVDTAASVISGIAEGCQLSGCALVGGETAEMPGMYHGEDYDVAGFCVGVVEKSEIIDGSKVQAGDALIALAASGPHSNGYSLIRKILAVSNTDPEATELESKSLADHLLAPTKIYVKSLLSLIEQVDIHAIAHLTGGGFWENIPRVLPENTQAQINESSWQWPAIFNWLQQTGNVSRHEMYRTFNCGVGMVIALPPTAVEQAIELLTAAGEKAWQIGTIATLKEGEQQVVIQ</sequence>
<protein>
    <recommendedName>
        <fullName evidence="1">Phosphoribosylformylglycinamidine cyclo-ligase</fullName>
        <ecNumber evidence="1">6.3.3.1</ecNumber>
    </recommendedName>
    <alternativeName>
        <fullName evidence="1">AIR synthase</fullName>
    </alternativeName>
    <alternativeName>
        <fullName evidence="1">AIRS</fullName>
    </alternativeName>
    <alternativeName>
        <fullName evidence="1">Phosphoribosyl-aminoimidazole synthetase</fullName>
    </alternativeName>
</protein>
<organism>
    <name type="scientific">Photorhabdus laumondii subsp. laumondii (strain DSM 15139 / CIP 105565 / TT01)</name>
    <name type="common">Photorhabdus luminescens subsp. laumondii</name>
    <dbReference type="NCBI Taxonomy" id="243265"/>
    <lineage>
        <taxon>Bacteria</taxon>
        <taxon>Pseudomonadati</taxon>
        <taxon>Pseudomonadota</taxon>
        <taxon>Gammaproteobacteria</taxon>
        <taxon>Enterobacterales</taxon>
        <taxon>Morganellaceae</taxon>
        <taxon>Photorhabdus</taxon>
    </lineage>
</organism>
<accession>Q7N3F7</accession>
<keyword id="KW-0067">ATP-binding</keyword>
<keyword id="KW-0963">Cytoplasm</keyword>
<keyword id="KW-0436">Ligase</keyword>
<keyword id="KW-0547">Nucleotide-binding</keyword>
<keyword id="KW-0658">Purine biosynthesis</keyword>
<keyword id="KW-1185">Reference proteome</keyword>
<gene>
    <name evidence="1" type="primary">purM</name>
    <name type="ordered locus">plu2760</name>
</gene>
<proteinExistence type="inferred from homology"/>
<dbReference type="EC" id="6.3.3.1" evidence="1"/>
<dbReference type="EMBL" id="BX571868">
    <property type="protein sequence ID" value="CAE15134.1"/>
    <property type="molecule type" value="Genomic_DNA"/>
</dbReference>
<dbReference type="RefSeq" id="WP_011146980.1">
    <property type="nucleotide sequence ID" value="NC_005126.1"/>
</dbReference>
<dbReference type="SMR" id="Q7N3F7"/>
<dbReference type="STRING" id="243265.plu2760"/>
<dbReference type="GeneID" id="48849022"/>
<dbReference type="KEGG" id="plu:plu2760"/>
<dbReference type="eggNOG" id="COG0150">
    <property type="taxonomic scope" value="Bacteria"/>
</dbReference>
<dbReference type="HOGENOM" id="CLU_047116_0_0_6"/>
<dbReference type="OrthoDB" id="9777881at2"/>
<dbReference type="UniPathway" id="UPA00074">
    <property type="reaction ID" value="UER00129"/>
</dbReference>
<dbReference type="Proteomes" id="UP000002514">
    <property type="component" value="Chromosome"/>
</dbReference>
<dbReference type="GO" id="GO:0005829">
    <property type="term" value="C:cytosol"/>
    <property type="evidence" value="ECO:0007669"/>
    <property type="project" value="TreeGrafter"/>
</dbReference>
<dbReference type="GO" id="GO:0005524">
    <property type="term" value="F:ATP binding"/>
    <property type="evidence" value="ECO:0007669"/>
    <property type="project" value="UniProtKB-KW"/>
</dbReference>
<dbReference type="GO" id="GO:0004637">
    <property type="term" value="F:phosphoribosylamine-glycine ligase activity"/>
    <property type="evidence" value="ECO:0007669"/>
    <property type="project" value="TreeGrafter"/>
</dbReference>
<dbReference type="GO" id="GO:0004641">
    <property type="term" value="F:phosphoribosylformylglycinamidine cyclo-ligase activity"/>
    <property type="evidence" value="ECO:0007669"/>
    <property type="project" value="UniProtKB-UniRule"/>
</dbReference>
<dbReference type="GO" id="GO:0006189">
    <property type="term" value="P:'de novo' IMP biosynthetic process"/>
    <property type="evidence" value="ECO:0007669"/>
    <property type="project" value="UniProtKB-UniRule"/>
</dbReference>
<dbReference type="GO" id="GO:0046084">
    <property type="term" value="P:adenine biosynthetic process"/>
    <property type="evidence" value="ECO:0007669"/>
    <property type="project" value="TreeGrafter"/>
</dbReference>
<dbReference type="CDD" id="cd02196">
    <property type="entry name" value="PurM"/>
    <property type="match status" value="1"/>
</dbReference>
<dbReference type="FunFam" id="3.30.1330.10:FF:000001">
    <property type="entry name" value="Phosphoribosylformylglycinamidine cyclo-ligase"/>
    <property type="match status" value="1"/>
</dbReference>
<dbReference type="FunFam" id="3.90.650.10:FF:000001">
    <property type="entry name" value="Phosphoribosylformylglycinamidine cyclo-ligase"/>
    <property type="match status" value="1"/>
</dbReference>
<dbReference type="Gene3D" id="3.90.650.10">
    <property type="entry name" value="PurM-like C-terminal domain"/>
    <property type="match status" value="1"/>
</dbReference>
<dbReference type="Gene3D" id="3.30.1330.10">
    <property type="entry name" value="PurM-like, N-terminal domain"/>
    <property type="match status" value="1"/>
</dbReference>
<dbReference type="HAMAP" id="MF_00741">
    <property type="entry name" value="AIRS"/>
    <property type="match status" value="1"/>
</dbReference>
<dbReference type="InterPro" id="IPR010918">
    <property type="entry name" value="PurM-like_C_dom"/>
</dbReference>
<dbReference type="InterPro" id="IPR036676">
    <property type="entry name" value="PurM-like_C_sf"/>
</dbReference>
<dbReference type="InterPro" id="IPR016188">
    <property type="entry name" value="PurM-like_N"/>
</dbReference>
<dbReference type="InterPro" id="IPR036921">
    <property type="entry name" value="PurM-like_N_sf"/>
</dbReference>
<dbReference type="InterPro" id="IPR004733">
    <property type="entry name" value="PurM_cligase"/>
</dbReference>
<dbReference type="NCBIfam" id="TIGR00878">
    <property type="entry name" value="purM"/>
    <property type="match status" value="1"/>
</dbReference>
<dbReference type="PANTHER" id="PTHR10520:SF12">
    <property type="entry name" value="TRIFUNCTIONAL PURINE BIOSYNTHETIC PROTEIN ADENOSINE-3"/>
    <property type="match status" value="1"/>
</dbReference>
<dbReference type="PANTHER" id="PTHR10520">
    <property type="entry name" value="TRIFUNCTIONAL PURINE BIOSYNTHETIC PROTEIN ADENOSINE-3-RELATED"/>
    <property type="match status" value="1"/>
</dbReference>
<dbReference type="Pfam" id="PF00586">
    <property type="entry name" value="AIRS"/>
    <property type="match status" value="1"/>
</dbReference>
<dbReference type="Pfam" id="PF02769">
    <property type="entry name" value="AIRS_C"/>
    <property type="match status" value="1"/>
</dbReference>
<dbReference type="SUPFAM" id="SSF56042">
    <property type="entry name" value="PurM C-terminal domain-like"/>
    <property type="match status" value="1"/>
</dbReference>
<dbReference type="SUPFAM" id="SSF55326">
    <property type="entry name" value="PurM N-terminal domain-like"/>
    <property type="match status" value="1"/>
</dbReference>